<reference key="1">
    <citation type="journal article" date="1998" name="J. Bacteriol.">
        <title>Transport of intact porphyrin by HpuAB, the hemoglobin-haptoglobin utilization system of Neisseria meningitidis.</title>
        <authorList>
            <person name="Lewis L.A."/>
            <person name="Sung M."/>
            <person name="Gipson M."/>
            <person name="Hartman K."/>
            <person name="Dyer D.W."/>
        </authorList>
    </citation>
    <scope>NUCLEOTIDE SEQUENCE [GENOMIC DNA]</scope>
</reference>
<reference key="2">
    <citation type="submission" date="2003-03" db="EMBL/GenBank/DDBJ databases">
        <title>The complete genome sequence of Neisseria gonorrhoeae.</title>
        <authorList>
            <person name="Lewis L.A."/>
            <person name="Gillaspy A.F."/>
            <person name="McLaughlin R.E."/>
            <person name="Gipson M."/>
            <person name="Ducey T.F."/>
            <person name="Ownbey T."/>
            <person name="Hartman K."/>
            <person name="Nydick C."/>
            <person name="Carson M.B."/>
            <person name="Vaughn J."/>
            <person name="Thomson C."/>
            <person name="Song L."/>
            <person name="Lin S."/>
            <person name="Yuan X."/>
            <person name="Najar F."/>
            <person name="Zhan M."/>
            <person name="Ren Q."/>
            <person name="Zhu H."/>
            <person name="Qi S."/>
            <person name="Kenton S.M."/>
            <person name="Lai H."/>
            <person name="White J.D."/>
            <person name="Clifton S."/>
            <person name="Roe B.A."/>
            <person name="Dyer D.W."/>
        </authorList>
    </citation>
    <scope>NUCLEOTIDE SEQUENCE [LARGE SCALE GENOMIC DNA]</scope>
    <source>
        <strain>ATCC 700825 / FA 1090</strain>
    </source>
</reference>
<feature type="chain" id="PRO_0000114044" description="Glutamyl-tRNA reductase">
    <location>
        <begin position="1"/>
        <end position="415"/>
    </location>
</feature>
<feature type="active site" description="Nucleophile" evidence="1">
    <location>
        <position position="50"/>
    </location>
</feature>
<feature type="binding site" evidence="1">
    <location>
        <begin position="49"/>
        <end position="52"/>
    </location>
    <ligand>
        <name>substrate</name>
    </ligand>
</feature>
<feature type="binding site" evidence="1">
    <location>
        <position position="104"/>
    </location>
    <ligand>
        <name>substrate</name>
    </ligand>
</feature>
<feature type="binding site" evidence="1">
    <location>
        <begin position="109"/>
        <end position="111"/>
    </location>
    <ligand>
        <name>substrate</name>
    </ligand>
</feature>
<feature type="binding site" evidence="1">
    <location>
        <position position="115"/>
    </location>
    <ligand>
        <name>substrate</name>
    </ligand>
</feature>
<feature type="binding site" evidence="1">
    <location>
        <begin position="184"/>
        <end position="189"/>
    </location>
    <ligand>
        <name>NADP(+)</name>
        <dbReference type="ChEBI" id="CHEBI:58349"/>
    </ligand>
</feature>
<feature type="site" description="Important for activity" evidence="1">
    <location>
        <position position="94"/>
    </location>
</feature>
<gene>
    <name evidence="1" type="primary">hemA</name>
    <name type="ordered locus">NGO_1403</name>
</gene>
<proteinExistence type="inferred from homology"/>
<name>HEM1_NEIG1</name>
<accession>Q9ZHD6</accession>
<accession>Q5F6Y9</accession>
<dbReference type="EC" id="1.2.1.70" evidence="1"/>
<dbReference type="EMBL" id="AF067426">
    <property type="protein sequence ID" value="AAC79428.1"/>
    <property type="molecule type" value="Genomic_DNA"/>
</dbReference>
<dbReference type="EMBL" id="AE004969">
    <property type="protein sequence ID" value="AAW90048.1"/>
    <property type="molecule type" value="Genomic_DNA"/>
</dbReference>
<dbReference type="RefSeq" id="WP_003689254.1">
    <property type="nucleotide sequence ID" value="NC_002946.2"/>
</dbReference>
<dbReference type="RefSeq" id="YP_208460.1">
    <property type="nucleotide sequence ID" value="NC_002946.2"/>
</dbReference>
<dbReference type="SMR" id="Q9ZHD6"/>
<dbReference type="STRING" id="242231.NGO_1403"/>
<dbReference type="GeneID" id="66753617"/>
<dbReference type="KEGG" id="ngo:NGO_1403"/>
<dbReference type="PATRIC" id="fig|242231.10.peg.1653"/>
<dbReference type="HOGENOM" id="CLU_035113_2_2_4"/>
<dbReference type="UniPathway" id="UPA00251">
    <property type="reaction ID" value="UER00316"/>
</dbReference>
<dbReference type="Proteomes" id="UP000000535">
    <property type="component" value="Chromosome"/>
</dbReference>
<dbReference type="GO" id="GO:0008883">
    <property type="term" value="F:glutamyl-tRNA reductase activity"/>
    <property type="evidence" value="ECO:0007669"/>
    <property type="project" value="UniProtKB-UniRule"/>
</dbReference>
<dbReference type="GO" id="GO:0050661">
    <property type="term" value="F:NADP binding"/>
    <property type="evidence" value="ECO:0007669"/>
    <property type="project" value="InterPro"/>
</dbReference>
<dbReference type="GO" id="GO:0019353">
    <property type="term" value="P:protoporphyrinogen IX biosynthetic process from glutamate"/>
    <property type="evidence" value="ECO:0007669"/>
    <property type="project" value="TreeGrafter"/>
</dbReference>
<dbReference type="CDD" id="cd05213">
    <property type="entry name" value="NAD_bind_Glutamyl_tRNA_reduct"/>
    <property type="match status" value="1"/>
</dbReference>
<dbReference type="FunFam" id="3.30.460.30:FF:000001">
    <property type="entry name" value="Glutamyl-tRNA reductase"/>
    <property type="match status" value="1"/>
</dbReference>
<dbReference type="FunFam" id="3.40.50.720:FF:000031">
    <property type="entry name" value="Glutamyl-tRNA reductase"/>
    <property type="match status" value="1"/>
</dbReference>
<dbReference type="Gene3D" id="3.30.460.30">
    <property type="entry name" value="Glutamyl-tRNA reductase, N-terminal domain"/>
    <property type="match status" value="1"/>
</dbReference>
<dbReference type="Gene3D" id="3.40.50.720">
    <property type="entry name" value="NAD(P)-binding Rossmann-like Domain"/>
    <property type="match status" value="1"/>
</dbReference>
<dbReference type="HAMAP" id="MF_00087">
    <property type="entry name" value="Glu_tRNA_reductase"/>
    <property type="match status" value="1"/>
</dbReference>
<dbReference type="InterPro" id="IPR000343">
    <property type="entry name" value="4pyrrol_synth_GluRdtase"/>
</dbReference>
<dbReference type="InterPro" id="IPR015896">
    <property type="entry name" value="4pyrrol_synth_GluRdtase_dimer"/>
</dbReference>
<dbReference type="InterPro" id="IPR015895">
    <property type="entry name" value="4pyrrol_synth_GluRdtase_N"/>
</dbReference>
<dbReference type="InterPro" id="IPR018214">
    <property type="entry name" value="GluRdtase_CS"/>
</dbReference>
<dbReference type="InterPro" id="IPR036453">
    <property type="entry name" value="GluRdtase_dimer_dom_sf"/>
</dbReference>
<dbReference type="InterPro" id="IPR036343">
    <property type="entry name" value="GluRdtase_N_sf"/>
</dbReference>
<dbReference type="InterPro" id="IPR036291">
    <property type="entry name" value="NAD(P)-bd_dom_sf"/>
</dbReference>
<dbReference type="InterPro" id="IPR006151">
    <property type="entry name" value="Shikm_DH/Glu-tRNA_Rdtase"/>
</dbReference>
<dbReference type="NCBIfam" id="TIGR01035">
    <property type="entry name" value="hemA"/>
    <property type="match status" value="1"/>
</dbReference>
<dbReference type="PANTHER" id="PTHR43013">
    <property type="entry name" value="GLUTAMYL-TRNA REDUCTASE"/>
    <property type="match status" value="1"/>
</dbReference>
<dbReference type="PANTHER" id="PTHR43013:SF1">
    <property type="entry name" value="GLUTAMYL-TRNA REDUCTASE"/>
    <property type="match status" value="1"/>
</dbReference>
<dbReference type="Pfam" id="PF00745">
    <property type="entry name" value="GlutR_dimer"/>
    <property type="match status" value="1"/>
</dbReference>
<dbReference type="Pfam" id="PF05201">
    <property type="entry name" value="GlutR_N"/>
    <property type="match status" value="1"/>
</dbReference>
<dbReference type="Pfam" id="PF01488">
    <property type="entry name" value="Shikimate_DH"/>
    <property type="match status" value="1"/>
</dbReference>
<dbReference type="PIRSF" id="PIRSF000445">
    <property type="entry name" value="4pyrrol_synth_GluRdtase"/>
    <property type="match status" value="1"/>
</dbReference>
<dbReference type="SUPFAM" id="SSF69742">
    <property type="entry name" value="Glutamyl tRNA-reductase catalytic, N-terminal domain"/>
    <property type="match status" value="1"/>
</dbReference>
<dbReference type="SUPFAM" id="SSF69075">
    <property type="entry name" value="Glutamyl tRNA-reductase dimerization domain"/>
    <property type="match status" value="1"/>
</dbReference>
<dbReference type="SUPFAM" id="SSF51735">
    <property type="entry name" value="NAD(P)-binding Rossmann-fold domains"/>
    <property type="match status" value="1"/>
</dbReference>
<dbReference type="PROSITE" id="PS00747">
    <property type="entry name" value="GLUTR"/>
    <property type="match status" value="1"/>
</dbReference>
<organism>
    <name type="scientific">Neisseria gonorrhoeae (strain ATCC 700825 / FA 1090)</name>
    <dbReference type="NCBI Taxonomy" id="242231"/>
    <lineage>
        <taxon>Bacteria</taxon>
        <taxon>Pseudomonadati</taxon>
        <taxon>Pseudomonadota</taxon>
        <taxon>Betaproteobacteria</taxon>
        <taxon>Neisseriales</taxon>
        <taxon>Neisseriaceae</taxon>
        <taxon>Neisseria</taxon>
    </lineage>
</organism>
<keyword id="KW-0521">NADP</keyword>
<keyword id="KW-0560">Oxidoreductase</keyword>
<keyword id="KW-0627">Porphyrin biosynthesis</keyword>
<keyword id="KW-1185">Reference proteome</keyword>
<sequence length="415" mass="45453">MQLTAVGLNHQTAPLSIREKLAFAAAALPEAVRNLARSNAATEAVILSTCNRTELYCVGDSEEIIRWLADYHSLPIEEIRPYLYTLDMQETVRHAFRVACGLDSMVLGEPQILGQIKDAVRAAQEQESMGAKLNALFQKTFSVAKEVRTDTAVGENSVSMASASVKLAEQIFPDIGDLNVLFIGAGEMIELVATYFAAKNPRLMTVANRTLARAQELCDKLGVNAEPCLLSDLPAILHDYDVVVSSTASQLPIVGKGMVERALKQRQSMPLFMLDLAVPRDIEAEVGDLNDAYLYTVDDMVNIVQSGKEARQKAAAAAETLVSEKVAEFVRQQQGRQSVPLIKALRDEGEKARKQVLENAMKQLAKGATAEEVLERLSVQLTNKLLHSPTQTLNKAGEEDKDLVHAVAQIYHLDK</sequence>
<evidence type="ECO:0000255" key="1">
    <source>
        <dbReference type="HAMAP-Rule" id="MF_00087"/>
    </source>
</evidence>
<protein>
    <recommendedName>
        <fullName evidence="1">Glutamyl-tRNA reductase</fullName>
        <shortName evidence="1">GluTR</shortName>
        <ecNumber evidence="1">1.2.1.70</ecNumber>
    </recommendedName>
</protein>
<comment type="function">
    <text evidence="1">Catalyzes the NADPH-dependent reduction of glutamyl-tRNA(Glu) to glutamate 1-semialdehyde (GSA).</text>
</comment>
<comment type="catalytic activity">
    <reaction evidence="1">
        <text>(S)-4-amino-5-oxopentanoate + tRNA(Glu) + NADP(+) = L-glutamyl-tRNA(Glu) + NADPH + H(+)</text>
        <dbReference type="Rhea" id="RHEA:12344"/>
        <dbReference type="Rhea" id="RHEA-COMP:9663"/>
        <dbReference type="Rhea" id="RHEA-COMP:9680"/>
        <dbReference type="ChEBI" id="CHEBI:15378"/>
        <dbReference type="ChEBI" id="CHEBI:57501"/>
        <dbReference type="ChEBI" id="CHEBI:57783"/>
        <dbReference type="ChEBI" id="CHEBI:58349"/>
        <dbReference type="ChEBI" id="CHEBI:78442"/>
        <dbReference type="ChEBI" id="CHEBI:78520"/>
        <dbReference type="EC" id="1.2.1.70"/>
    </reaction>
</comment>
<comment type="pathway">
    <text evidence="1">Porphyrin-containing compound metabolism; protoporphyrin-IX biosynthesis; 5-aminolevulinate from L-glutamyl-tRNA(Glu): step 1/2.</text>
</comment>
<comment type="subunit">
    <text evidence="1">Homodimer.</text>
</comment>
<comment type="domain">
    <text evidence="1">Possesses an unusual extended V-shaped dimeric structure with each monomer consisting of three distinct domains arranged along a curved 'spinal' alpha-helix. The N-terminal catalytic domain specifically recognizes the glutamate moiety of the substrate. The second domain is the NADPH-binding domain, and the third C-terminal domain is responsible for dimerization.</text>
</comment>
<comment type="miscellaneous">
    <text evidence="1">During catalysis, the active site Cys acts as a nucleophile attacking the alpha-carbonyl group of tRNA-bound glutamate with the formation of a thioester intermediate between enzyme and glutamate, and the concomitant release of tRNA(Glu). The thioester intermediate is finally reduced by direct hydride transfer from NADPH, to form the product GSA.</text>
</comment>
<comment type="similarity">
    <text evidence="1">Belongs to the glutamyl-tRNA reductase family.</text>
</comment>